<evidence type="ECO:0000255" key="1">
    <source>
        <dbReference type="HAMAP-Rule" id="MF_01335"/>
    </source>
</evidence>
<dbReference type="EC" id="7.1.1.6" evidence="1"/>
<dbReference type="EMBL" id="CP000553">
    <property type="protein sequence ID" value="ABM75079.1"/>
    <property type="molecule type" value="Genomic_DNA"/>
</dbReference>
<dbReference type="RefSeq" id="WP_011294427.1">
    <property type="nucleotide sequence ID" value="NC_008819.1"/>
</dbReference>
<dbReference type="SMR" id="A2C0R9"/>
<dbReference type="KEGG" id="pme:NATL1_05171"/>
<dbReference type="eggNOG" id="COG0723">
    <property type="taxonomic scope" value="Bacteria"/>
</dbReference>
<dbReference type="HOGENOM" id="CLU_055690_8_0_3"/>
<dbReference type="Proteomes" id="UP000002592">
    <property type="component" value="Chromosome"/>
</dbReference>
<dbReference type="GO" id="GO:0031676">
    <property type="term" value="C:plasma membrane-derived thylakoid membrane"/>
    <property type="evidence" value="ECO:0007669"/>
    <property type="project" value="UniProtKB-SubCell"/>
</dbReference>
<dbReference type="GO" id="GO:0051537">
    <property type="term" value="F:2 iron, 2 sulfur cluster binding"/>
    <property type="evidence" value="ECO:0007669"/>
    <property type="project" value="UniProtKB-KW"/>
</dbReference>
<dbReference type="GO" id="GO:0045158">
    <property type="term" value="F:electron transporter, transferring electrons within cytochrome b6/f complex of photosystem II activity"/>
    <property type="evidence" value="ECO:0007669"/>
    <property type="project" value="UniProtKB-UniRule"/>
</dbReference>
<dbReference type="GO" id="GO:0046872">
    <property type="term" value="F:metal ion binding"/>
    <property type="evidence" value="ECO:0007669"/>
    <property type="project" value="UniProtKB-KW"/>
</dbReference>
<dbReference type="GO" id="GO:0004497">
    <property type="term" value="F:monooxygenase activity"/>
    <property type="evidence" value="ECO:0007669"/>
    <property type="project" value="UniProtKB-ARBA"/>
</dbReference>
<dbReference type="GO" id="GO:0016705">
    <property type="term" value="F:oxidoreductase activity, acting on paired donors, with incorporation or reduction of molecular oxygen"/>
    <property type="evidence" value="ECO:0007669"/>
    <property type="project" value="UniProtKB-ARBA"/>
</dbReference>
<dbReference type="GO" id="GO:0009496">
    <property type="term" value="F:plastoquinol--plastocyanin reductase activity"/>
    <property type="evidence" value="ECO:0007669"/>
    <property type="project" value="UniProtKB-UniRule"/>
</dbReference>
<dbReference type="GO" id="GO:0015979">
    <property type="term" value="P:photosynthesis"/>
    <property type="evidence" value="ECO:0007669"/>
    <property type="project" value="UniProtKB-UniRule"/>
</dbReference>
<dbReference type="CDD" id="cd03471">
    <property type="entry name" value="Rieske_cytochrome_b6f"/>
    <property type="match status" value="1"/>
</dbReference>
<dbReference type="FunFam" id="2.102.10.10:FF:000007">
    <property type="entry name" value="Cytochrome b6-f complex iron-sulfur subunit"/>
    <property type="match status" value="1"/>
</dbReference>
<dbReference type="Gene3D" id="2.102.10.10">
    <property type="entry name" value="Rieske [2Fe-2S] iron-sulphur domain"/>
    <property type="match status" value="1"/>
</dbReference>
<dbReference type="Gene3D" id="1.20.5.700">
    <property type="entry name" value="Single helix bin"/>
    <property type="match status" value="1"/>
</dbReference>
<dbReference type="HAMAP" id="MF_01335">
    <property type="entry name" value="Cytb6_f_Rieske"/>
    <property type="match status" value="1"/>
</dbReference>
<dbReference type="InterPro" id="IPR023960">
    <property type="entry name" value="Cyt_b6_f_Rieske"/>
</dbReference>
<dbReference type="InterPro" id="IPR017941">
    <property type="entry name" value="Rieske_2Fe-2S"/>
</dbReference>
<dbReference type="InterPro" id="IPR036922">
    <property type="entry name" value="Rieske_2Fe-2S_sf"/>
</dbReference>
<dbReference type="InterPro" id="IPR014349">
    <property type="entry name" value="Rieske_Fe-S_prot"/>
</dbReference>
<dbReference type="InterPro" id="IPR005805">
    <property type="entry name" value="Rieske_Fe-S_prot_C"/>
</dbReference>
<dbReference type="InterPro" id="IPR006311">
    <property type="entry name" value="TAT_signal"/>
</dbReference>
<dbReference type="NCBIfam" id="NF045928">
    <property type="entry name" value="Cytb6fFeSPetC"/>
    <property type="match status" value="1"/>
</dbReference>
<dbReference type="NCBIfam" id="NF010001">
    <property type="entry name" value="PRK13474.1"/>
    <property type="match status" value="1"/>
</dbReference>
<dbReference type="PANTHER" id="PTHR10134">
    <property type="entry name" value="CYTOCHROME B-C1 COMPLEX SUBUNIT RIESKE, MITOCHONDRIAL"/>
    <property type="match status" value="1"/>
</dbReference>
<dbReference type="Pfam" id="PF00355">
    <property type="entry name" value="Rieske"/>
    <property type="match status" value="1"/>
</dbReference>
<dbReference type="Pfam" id="PF25471">
    <property type="entry name" value="TM_PetC"/>
    <property type="match status" value="1"/>
</dbReference>
<dbReference type="PRINTS" id="PR00162">
    <property type="entry name" value="RIESKE"/>
</dbReference>
<dbReference type="SUPFAM" id="SSF50022">
    <property type="entry name" value="ISP domain"/>
    <property type="match status" value="1"/>
</dbReference>
<dbReference type="PROSITE" id="PS51296">
    <property type="entry name" value="RIESKE"/>
    <property type="match status" value="1"/>
</dbReference>
<dbReference type="PROSITE" id="PS51318">
    <property type="entry name" value="TAT"/>
    <property type="match status" value="1"/>
</dbReference>
<organism>
    <name type="scientific">Prochlorococcus marinus (strain NATL1A)</name>
    <dbReference type="NCBI Taxonomy" id="167555"/>
    <lineage>
        <taxon>Bacteria</taxon>
        <taxon>Bacillati</taxon>
        <taxon>Cyanobacteriota</taxon>
        <taxon>Cyanophyceae</taxon>
        <taxon>Synechococcales</taxon>
        <taxon>Prochlorococcaceae</taxon>
        <taxon>Prochlorococcus</taxon>
    </lineage>
</organism>
<feature type="chain" id="PRO_0000298460" description="Cytochrome b6-f complex iron-sulfur subunit">
    <location>
        <begin position="1"/>
        <end position="178"/>
    </location>
</feature>
<feature type="transmembrane region" description="Helical" evidence="1">
    <location>
        <begin position="20"/>
        <end position="42"/>
    </location>
</feature>
<feature type="domain" description="Rieske" evidence="1">
    <location>
        <begin position="71"/>
        <end position="161"/>
    </location>
</feature>
<feature type="binding site" evidence="1">
    <location>
        <position position="107"/>
    </location>
    <ligand>
        <name>[2Fe-2S] cluster</name>
        <dbReference type="ChEBI" id="CHEBI:190135"/>
    </ligand>
</feature>
<feature type="binding site" evidence="1">
    <location>
        <position position="109"/>
    </location>
    <ligand>
        <name>[2Fe-2S] cluster</name>
        <dbReference type="ChEBI" id="CHEBI:190135"/>
    </ligand>
</feature>
<feature type="binding site" evidence="1">
    <location>
        <position position="125"/>
    </location>
    <ligand>
        <name>[2Fe-2S] cluster</name>
        <dbReference type="ChEBI" id="CHEBI:190135"/>
    </ligand>
</feature>
<feature type="binding site" evidence="1">
    <location>
        <position position="128"/>
    </location>
    <ligand>
        <name>[2Fe-2S] cluster</name>
        <dbReference type="ChEBI" id="CHEBI:190135"/>
    </ligand>
</feature>
<feature type="disulfide bond" evidence="1">
    <location>
        <begin position="112"/>
        <end position="127"/>
    </location>
</feature>
<reference key="1">
    <citation type="journal article" date="2007" name="PLoS Genet.">
        <title>Patterns and implications of gene gain and loss in the evolution of Prochlorococcus.</title>
        <authorList>
            <person name="Kettler G.C."/>
            <person name="Martiny A.C."/>
            <person name="Huang K."/>
            <person name="Zucker J."/>
            <person name="Coleman M.L."/>
            <person name="Rodrigue S."/>
            <person name="Chen F."/>
            <person name="Lapidus A."/>
            <person name="Ferriera S."/>
            <person name="Johnson J."/>
            <person name="Steglich C."/>
            <person name="Church G.M."/>
            <person name="Richardson P."/>
            <person name="Chisholm S.W."/>
        </authorList>
    </citation>
    <scope>NUCLEOTIDE SEQUENCE [LARGE SCALE GENOMIC DNA]</scope>
    <source>
        <strain>NATL1A</strain>
    </source>
</reference>
<sequence length="178" mass="18904">MTQMTTADVPSMGRRQFMNLLTFGTVTGVALGALYPVAQYFTPYRAGGGGGGTNAKDELGNNVSASGWLSTHPVGDRSLVQGLKGDPTYLIVEGEDAITSYGINAICTHLGCVVPWNSGANKYMCPCHGSQYDSTGKVVRGPAPLSLAIAHVSIEDDQVLVSQWTETDFRTGTDPWWG</sequence>
<name>UCRI_PROM1</name>
<accession>A2C0R9</accession>
<gene>
    <name evidence="1" type="primary">petC</name>
    <name type="ordered locus">NATL1_05171</name>
</gene>
<protein>
    <recommendedName>
        <fullName evidence="1">Cytochrome b6-f complex iron-sulfur subunit</fullName>
        <ecNumber evidence="1">7.1.1.6</ecNumber>
    </recommendedName>
    <alternativeName>
        <fullName evidence="1">Plastohydroquinone:plastocyanin oxidoreductase iron-sulfur protein</fullName>
        <shortName evidence="1">ISP</shortName>
        <shortName evidence="1">RISP</shortName>
    </alternativeName>
    <alternativeName>
        <fullName evidence="1">Rieske iron-sulfur protein</fullName>
    </alternativeName>
</protein>
<proteinExistence type="inferred from homology"/>
<keyword id="KW-0001">2Fe-2S</keyword>
<keyword id="KW-1015">Disulfide bond</keyword>
<keyword id="KW-0249">Electron transport</keyword>
<keyword id="KW-0408">Iron</keyword>
<keyword id="KW-0411">Iron-sulfur</keyword>
<keyword id="KW-0472">Membrane</keyword>
<keyword id="KW-0479">Metal-binding</keyword>
<keyword id="KW-0793">Thylakoid</keyword>
<keyword id="KW-1278">Translocase</keyword>
<keyword id="KW-0812">Transmembrane</keyword>
<keyword id="KW-1133">Transmembrane helix</keyword>
<keyword id="KW-0813">Transport</keyword>
<comment type="function">
    <text evidence="1">Component of the cytochrome b6-f complex, which mediates electron transfer between photosystem II (PSII) and photosystem I (PSI), cyclic electron flow around PSI, and state transitions.</text>
</comment>
<comment type="catalytic activity">
    <reaction evidence="1">
        <text>2 oxidized [plastocyanin] + a plastoquinol + 2 H(+)(in) = 2 reduced [plastocyanin] + a plastoquinone + 4 H(+)(out)</text>
        <dbReference type="Rhea" id="RHEA:22148"/>
        <dbReference type="Rhea" id="RHEA-COMP:9561"/>
        <dbReference type="Rhea" id="RHEA-COMP:9562"/>
        <dbReference type="Rhea" id="RHEA-COMP:10039"/>
        <dbReference type="Rhea" id="RHEA-COMP:10040"/>
        <dbReference type="ChEBI" id="CHEBI:15378"/>
        <dbReference type="ChEBI" id="CHEBI:17757"/>
        <dbReference type="ChEBI" id="CHEBI:29036"/>
        <dbReference type="ChEBI" id="CHEBI:49552"/>
        <dbReference type="ChEBI" id="CHEBI:62192"/>
        <dbReference type="EC" id="7.1.1.6"/>
    </reaction>
</comment>
<comment type="cofactor">
    <cofactor evidence="1">
        <name>[2Fe-2S] cluster</name>
        <dbReference type="ChEBI" id="CHEBI:190135"/>
    </cofactor>
    <text evidence="1">Binds 1 [2Fe-2S] cluster per subunit.</text>
</comment>
<comment type="subunit">
    <text evidence="1">The 4 large subunits of the cytochrome b6-f complex are cytochrome b6, subunit IV (17 kDa polypeptide, PetD), cytochrome f and the Rieske protein, while the 4 small subunits are PetG, PetL, PetM and PetN. The complex functions as a dimer.</text>
</comment>
<comment type="subcellular location">
    <subcellularLocation>
        <location evidence="1">Cellular thylakoid membrane</location>
        <topology evidence="1">Single-pass membrane protein</topology>
    </subcellularLocation>
    <text evidence="1">The transmembrane helix obliquely spans the membrane in one monomer, and its extrinsic C-terminal domain is part of the other monomer.</text>
</comment>
<comment type="miscellaneous">
    <text>The Rieske iron-sulfur protein is a high potential 2Fe-2S protein.</text>
</comment>
<comment type="similarity">
    <text evidence="1">Belongs to the Rieske iron-sulfur protein family.</text>
</comment>